<protein>
    <recommendedName>
        <fullName>Cuticle protein 7 isoform c</fullName>
    </recommendedName>
    <alternativeName>
        <fullName>LpCP7c</fullName>
    </alternativeName>
</protein>
<name>CU7C_LIMPO</name>
<keyword id="KW-0193">Cuticle</keyword>
<keyword id="KW-0903">Direct protein sequencing</keyword>
<keyword id="KW-0873">Pyrrolidone carboxylic acid</keyword>
<organism evidence="2">
    <name type="scientific">Limulus polyphemus</name>
    <name type="common">Atlantic horseshoe crab</name>
    <dbReference type="NCBI Taxonomy" id="6850"/>
    <lineage>
        <taxon>Eukaryota</taxon>
        <taxon>Metazoa</taxon>
        <taxon>Ecdysozoa</taxon>
        <taxon>Arthropoda</taxon>
        <taxon>Chelicerata</taxon>
        <taxon>Merostomata</taxon>
        <taxon>Xiphosura</taxon>
        <taxon>Limulidae</taxon>
        <taxon>Limulus</taxon>
    </lineage>
</organism>
<comment type="mass spectrometry"/>
<dbReference type="SMR" id="P83361"/>
<dbReference type="Proteomes" id="UP000694941">
    <property type="component" value="Unplaced"/>
</dbReference>
<dbReference type="GO" id="GO:0042302">
    <property type="term" value="F:structural constituent of cuticle"/>
    <property type="evidence" value="ECO:0007669"/>
    <property type="project" value="UniProtKB-KW"/>
</dbReference>
<dbReference type="InterPro" id="IPR012540">
    <property type="entry name" value="Cuticle_2"/>
</dbReference>
<dbReference type="Pfam" id="PF08184">
    <property type="entry name" value="Cuticle_2"/>
    <property type="match status" value="1"/>
</dbReference>
<evidence type="ECO:0000269" key="1">
    <source>
    </source>
</evidence>
<evidence type="ECO:0000305" key="2"/>
<reference key="1">
    <citation type="journal article" date="2003" name="Comp. Biochem. Physiol.">
        <title>Cuticular proteins from the horseshoe crab, Limulus polyphemus.</title>
        <authorList>
            <person name="Ditzel N."/>
            <person name="Andersen S.O."/>
            <person name="Hoejrup P."/>
        </authorList>
    </citation>
    <scope>PROTEIN SEQUENCE</scope>
    <scope>MASS SPECTROMETRY</scope>
    <scope>PYROGLUTAMATE FORMATION AT GLN-1</scope>
    <source>
        <tissue>Carapace cuticle</tissue>
    </source>
</reference>
<feature type="chain" id="PRO_0000196175" description="Cuticle protein 7 isoform c">
    <location>
        <begin position="1"/>
        <end position="59"/>
    </location>
</feature>
<feature type="modified residue" description="Pyrrolidone carboxylic acid" evidence="1">
    <location>
        <position position="1"/>
    </location>
</feature>
<accession>P83361</accession>
<sequence>QAVRYADGYTYDIETGQVSSPYTGRVYETKGKAPFYGFGFEHPYHYYPGYYHGYPHAFY</sequence>
<proteinExistence type="evidence at protein level"/>